<name>RS7_DICDI</name>
<keyword id="KW-0903">Direct protein sequencing</keyword>
<keyword id="KW-1185">Reference proteome</keyword>
<keyword id="KW-0687">Ribonucleoprotein</keyword>
<keyword id="KW-0689">Ribosomal protein</keyword>
<protein>
    <recommendedName>
        <fullName evidence="1">Small ribosomal subunit protein eS7</fullName>
    </recommendedName>
    <alternativeName>
        <fullName>40S ribosomal protein S7</fullName>
    </alternativeName>
</protein>
<sequence length="193" mass="22147">MLNKKIIKPAGKVATEFENTVAQALVDLENNNAELKDLKDLSVCSVKEVDVAESKKAVVIFVPFRQLKNYNKIQQKLTYEVEKKLGGKQVMFIAQRRIIRKPASNNKIKMQKRPISRTIKAVHDAILDDLVFPNTIVGRRLRYRLDGSKLHKIYLDRKEMLSNISKVDSFSAVYHKLTGKEVVFEFTQQTAEN</sequence>
<proteinExistence type="evidence at protein level"/>
<organism>
    <name type="scientific">Dictyostelium discoideum</name>
    <name type="common">Social amoeba</name>
    <dbReference type="NCBI Taxonomy" id="44689"/>
    <lineage>
        <taxon>Eukaryota</taxon>
        <taxon>Amoebozoa</taxon>
        <taxon>Evosea</taxon>
        <taxon>Eumycetozoa</taxon>
        <taxon>Dictyostelia</taxon>
        <taxon>Dictyosteliales</taxon>
        <taxon>Dictyosteliaceae</taxon>
        <taxon>Dictyostelium</taxon>
    </lineage>
</organism>
<feature type="chain" id="PRO_0000325944" description="Small ribosomal subunit protein eS7">
    <location>
        <begin position="1"/>
        <end position="193"/>
    </location>
</feature>
<evidence type="ECO:0000305" key="1"/>
<reference key="1">
    <citation type="journal article" date="2005" name="Nature">
        <title>The genome of the social amoeba Dictyostelium discoideum.</title>
        <authorList>
            <person name="Eichinger L."/>
            <person name="Pachebat J.A."/>
            <person name="Gloeckner G."/>
            <person name="Rajandream M.A."/>
            <person name="Sucgang R."/>
            <person name="Berriman M."/>
            <person name="Song J."/>
            <person name="Olsen R."/>
            <person name="Szafranski K."/>
            <person name="Xu Q."/>
            <person name="Tunggal B."/>
            <person name="Kummerfeld S."/>
            <person name="Madera M."/>
            <person name="Konfortov B.A."/>
            <person name="Rivero F."/>
            <person name="Bankier A.T."/>
            <person name="Lehmann R."/>
            <person name="Hamlin N."/>
            <person name="Davies R."/>
            <person name="Gaudet P."/>
            <person name="Fey P."/>
            <person name="Pilcher K."/>
            <person name="Chen G."/>
            <person name="Saunders D."/>
            <person name="Sodergren E.J."/>
            <person name="Davis P."/>
            <person name="Kerhornou A."/>
            <person name="Nie X."/>
            <person name="Hall N."/>
            <person name="Anjard C."/>
            <person name="Hemphill L."/>
            <person name="Bason N."/>
            <person name="Farbrother P."/>
            <person name="Desany B."/>
            <person name="Just E."/>
            <person name="Morio T."/>
            <person name="Rost R."/>
            <person name="Churcher C.M."/>
            <person name="Cooper J."/>
            <person name="Haydock S."/>
            <person name="van Driessche N."/>
            <person name="Cronin A."/>
            <person name="Goodhead I."/>
            <person name="Muzny D.M."/>
            <person name="Mourier T."/>
            <person name="Pain A."/>
            <person name="Lu M."/>
            <person name="Harper D."/>
            <person name="Lindsay R."/>
            <person name="Hauser H."/>
            <person name="James K.D."/>
            <person name="Quiles M."/>
            <person name="Madan Babu M."/>
            <person name="Saito T."/>
            <person name="Buchrieser C."/>
            <person name="Wardroper A."/>
            <person name="Felder M."/>
            <person name="Thangavelu M."/>
            <person name="Johnson D."/>
            <person name="Knights A."/>
            <person name="Loulseged H."/>
            <person name="Mungall K.L."/>
            <person name="Oliver K."/>
            <person name="Price C."/>
            <person name="Quail M.A."/>
            <person name="Urushihara H."/>
            <person name="Hernandez J."/>
            <person name="Rabbinowitsch E."/>
            <person name="Steffen D."/>
            <person name="Sanders M."/>
            <person name="Ma J."/>
            <person name="Kohara Y."/>
            <person name="Sharp S."/>
            <person name="Simmonds M.N."/>
            <person name="Spiegler S."/>
            <person name="Tivey A."/>
            <person name="Sugano S."/>
            <person name="White B."/>
            <person name="Walker D."/>
            <person name="Woodward J.R."/>
            <person name="Winckler T."/>
            <person name="Tanaka Y."/>
            <person name="Shaulsky G."/>
            <person name="Schleicher M."/>
            <person name="Weinstock G.M."/>
            <person name="Rosenthal A."/>
            <person name="Cox E.C."/>
            <person name="Chisholm R.L."/>
            <person name="Gibbs R.A."/>
            <person name="Loomis W.F."/>
            <person name="Platzer M."/>
            <person name="Kay R.R."/>
            <person name="Williams J.G."/>
            <person name="Dear P.H."/>
            <person name="Noegel A.A."/>
            <person name="Barrell B.G."/>
            <person name="Kuspa A."/>
        </authorList>
    </citation>
    <scope>NUCLEOTIDE SEQUENCE [LARGE SCALE GENOMIC DNA]</scope>
    <source>
        <strain>AX4</strain>
    </source>
</reference>
<reference key="2">
    <citation type="submission" date="2010-01" db="UniProtKB">
        <authorList>
            <person name="Bienvenut W.V."/>
            <person name="Veltman D.M."/>
            <person name="Insall R.H."/>
        </authorList>
    </citation>
    <scope>PROTEIN SEQUENCE OF 56-65; 77-84; 89-96 AND 167-176</scope>
    <scope>IDENTIFICATION BY MASS SPECTROMETRY</scope>
</reference>
<accession>Q54I41</accession>
<comment type="similarity">
    <text evidence="1">Belongs to the eukaryotic ribosomal protein eS7 family.</text>
</comment>
<gene>
    <name type="primary">rps7</name>
    <name type="synonym">rpgE</name>
    <name type="ORF">DDB_G0289025</name>
</gene>
<dbReference type="EMBL" id="AAFI02000129">
    <property type="protein sequence ID" value="EAL62928.1"/>
    <property type="molecule type" value="Genomic_DNA"/>
</dbReference>
<dbReference type="RefSeq" id="XP_636430.1">
    <property type="nucleotide sequence ID" value="XM_631338.1"/>
</dbReference>
<dbReference type="SMR" id="Q54I41"/>
<dbReference type="FunCoup" id="Q54I41">
    <property type="interactions" value="756"/>
</dbReference>
<dbReference type="STRING" id="44689.Q54I41"/>
<dbReference type="PaxDb" id="44689-DDB0230024"/>
<dbReference type="EnsemblProtists" id="EAL62928">
    <property type="protein sequence ID" value="EAL62928"/>
    <property type="gene ID" value="DDB_G0289025"/>
</dbReference>
<dbReference type="GeneID" id="8626922"/>
<dbReference type="KEGG" id="ddi:DDB_G0289025"/>
<dbReference type="dictyBase" id="DDB_G0289025">
    <property type="gene designation" value="rps7"/>
</dbReference>
<dbReference type="VEuPathDB" id="AmoebaDB:DDB_G0289025"/>
<dbReference type="eggNOG" id="KOG3320">
    <property type="taxonomic scope" value="Eukaryota"/>
</dbReference>
<dbReference type="HOGENOM" id="CLU_088621_1_2_1"/>
<dbReference type="InParanoid" id="Q54I41"/>
<dbReference type="OMA" id="AAYHKVQ"/>
<dbReference type="PhylomeDB" id="Q54I41"/>
<dbReference type="Reactome" id="R-DDI-156827">
    <property type="pathway name" value="L13a-mediated translational silencing of Ceruloplasmin expression"/>
</dbReference>
<dbReference type="Reactome" id="R-DDI-1799339">
    <property type="pathway name" value="SRP-dependent cotranslational protein targeting to membrane"/>
</dbReference>
<dbReference type="Reactome" id="R-DDI-6791226">
    <property type="pathway name" value="Major pathway of rRNA processing in the nucleolus and cytosol"/>
</dbReference>
<dbReference type="Reactome" id="R-DDI-72689">
    <property type="pathway name" value="Formation of a pool of free 40S subunits"/>
</dbReference>
<dbReference type="Reactome" id="R-DDI-72695">
    <property type="pathway name" value="Formation of the ternary complex, and subsequently, the 43S complex"/>
</dbReference>
<dbReference type="Reactome" id="R-DDI-72702">
    <property type="pathway name" value="Ribosomal scanning and start codon recognition"/>
</dbReference>
<dbReference type="Reactome" id="R-DDI-72706">
    <property type="pathway name" value="GTP hydrolysis and joining of the 60S ribosomal subunit"/>
</dbReference>
<dbReference type="Reactome" id="R-DDI-975956">
    <property type="pathway name" value="Nonsense Mediated Decay (NMD) independent of the Exon Junction Complex (EJC)"/>
</dbReference>
<dbReference type="Reactome" id="R-DDI-975957">
    <property type="pathway name" value="Nonsense Mediated Decay (NMD) enhanced by the Exon Junction Complex (EJC)"/>
</dbReference>
<dbReference type="PRO" id="PR:Q54I41"/>
<dbReference type="Proteomes" id="UP000002195">
    <property type="component" value="Chromosome 5"/>
</dbReference>
<dbReference type="GO" id="GO:0022627">
    <property type="term" value="C:cytosolic small ribosomal subunit"/>
    <property type="evidence" value="ECO:0000318"/>
    <property type="project" value="GO_Central"/>
</dbReference>
<dbReference type="GO" id="GO:0032040">
    <property type="term" value="C:small-subunit processome"/>
    <property type="evidence" value="ECO:0000318"/>
    <property type="project" value="GO_Central"/>
</dbReference>
<dbReference type="GO" id="GO:0003735">
    <property type="term" value="F:structural constituent of ribosome"/>
    <property type="evidence" value="ECO:0007669"/>
    <property type="project" value="InterPro"/>
</dbReference>
<dbReference type="GO" id="GO:0042274">
    <property type="term" value="P:ribosomal small subunit biogenesis"/>
    <property type="evidence" value="ECO:0000318"/>
    <property type="project" value="GO_Central"/>
</dbReference>
<dbReference type="GO" id="GO:0006364">
    <property type="term" value="P:rRNA processing"/>
    <property type="evidence" value="ECO:0000318"/>
    <property type="project" value="GO_Central"/>
</dbReference>
<dbReference type="GO" id="GO:0006412">
    <property type="term" value="P:translation"/>
    <property type="evidence" value="ECO:0007669"/>
    <property type="project" value="InterPro"/>
</dbReference>
<dbReference type="InterPro" id="IPR000554">
    <property type="entry name" value="Ribosomal_eS7"/>
</dbReference>
<dbReference type="PANTHER" id="PTHR11278">
    <property type="entry name" value="40S RIBOSOMAL PROTEIN S7"/>
    <property type="match status" value="1"/>
</dbReference>
<dbReference type="PANTHER" id="PTHR11278:SF0">
    <property type="entry name" value="SMALL RIBOSOMAL SUBUNIT PROTEIN ES7"/>
    <property type="match status" value="1"/>
</dbReference>
<dbReference type="Pfam" id="PF01251">
    <property type="entry name" value="Ribosomal_S7e"/>
    <property type="match status" value="1"/>
</dbReference>